<proteinExistence type="evidence at protein level"/>
<reference key="1">
    <citation type="journal article" date="1995" name="Cell">
        <title>Identification of a novel cellular cofactor for the Rev/Rex class of retroviral regulatory proteins.</title>
        <authorList>
            <person name="Bogerd H.P."/>
            <person name="Fridell R.A."/>
            <person name="Madore S."/>
            <person name="Cullen B.R."/>
        </authorList>
    </citation>
    <scope>NUCLEOTIDE SEQUENCE [GENOMIC DNA]</scope>
    <scope>ALTERNATIVE SPLICING (ISOFORM 1)</scope>
    <scope>INTERACTION WITH HIV-1 REV AND HTLV-1 REX</scope>
    <scope>SUBCELLULAR LOCATION</scope>
    <scope>TISSUE SPECIFICITY</scope>
</reference>
<reference key="2">
    <citation type="journal article" date="1995" name="Nature">
        <title>A human nucleoporin-like protein that specifically interacts with HIV Rev.</title>
        <authorList>
            <person name="Fritz C.C."/>
            <person name="Zapp M.L."/>
            <person name="Green M.R."/>
        </authorList>
    </citation>
    <scope>NUCLEOTIDE SEQUENCE [MRNA] (ISOFORM 1)</scope>
    <scope>INTERACTION WITH HIV-1 REV</scope>
    <source>
        <tissue>Placenta</tissue>
    </source>
</reference>
<reference key="3">
    <citation type="journal article" date="2004" name="Nat. Genet.">
        <title>Complete sequencing and characterization of 21,243 full-length human cDNAs.</title>
        <authorList>
            <person name="Ota T."/>
            <person name="Suzuki Y."/>
            <person name="Nishikawa T."/>
            <person name="Otsuki T."/>
            <person name="Sugiyama T."/>
            <person name="Irie R."/>
            <person name="Wakamatsu A."/>
            <person name="Hayashi K."/>
            <person name="Sato H."/>
            <person name="Nagai K."/>
            <person name="Kimura K."/>
            <person name="Makita H."/>
            <person name="Sekine M."/>
            <person name="Obayashi M."/>
            <person name="Nishi T."/>
            <person name="Shibahara T."/>
            <person name="Tanaka T."/>
            <person name="Ishii S."/>
            <person name="Yamamoto J."/>
            <person name="Saito K."/>
            <person name="Kawai Y."/>
            <person name="Isono Y."/>
            <person name="Nakamura Y."/>
            <person name="Nagahari K."/>
            <person name="Murakami K."/>
            <person name="Yasuda T."/>
            <person name="Iwayanagi T."/>
            <person name="Wagatsuma M."/>
            <person name="Shiratori A."/>
            <person name="Sudo H."/>
            <person name="Hosoiri T."/>
            <person name="Kaku Y."/>
            <person name="Kodaira H."/>
            <person name="Kondo H."/>
            <person name="Sugawara M."/>
            <person name="Takahashi M."/>
            <person name="Kanda K."/>
            <person name="Yokoi T."/>
            <person name="Furuya T."/>
            <person name="Kikkawa E."/>
            <person name="Omura Y."/>
            <person name="Abe K."/>
            <person name="Kamihara K."/>
            <person name="Katsuta N."/>
            <person name="Sato K."/>
            <person name="Tanikawa M."/>
            <person name="Yamazaki M."/>
            <person name="Ninomiya K."/>
            <person name="Ishibashi T."/>
            <person name="Yamashita H."/>
            <person name="Murakawa K."/>
            <person name="Fujimori K."/>
            <person name="Tanai H."/>
            <person name="Kimata M."/>
            <person name="Watanabe M."/>
            <person name="Hiraoka S."/>
            <person name="Chiba Y."/>
            <person name="Ishida S."/>
            <person name="Ono Y."/>
            <person name="Takiguchi S."/>
            <person name="Watanabe S."/>
            <person name="Yosida M."/>
            <person name="Hotuta T."/>
            <person name="Kusano J."/>
            <person name="Kanehori K."/>
            <person name="Takahashi-Fujii A."/>
            <person name="Hara H."/>
            <person name="Tanase T.-O."/>
            <person name="Nomura Y."/>
            <person name="Togiya S."/>
            <person name="Komai F."/>
            <person name="Hara R."/>
            <person name="Takeuchi K."/>
            <person name="Arita M."/>
            <person name="Imose N."/>
            <person name="Musashino K."/>
            <person name="Yuuki H."/>
            <person name="Oshima A."/>
            <person name="Sasaki N."/>
            <person name="Aotsuka S."/>
            <person name="Yoshikawa Y."/>
            <person name="Matsunawa H."/>
            <person name="Ichihara T."/>
            <person name="Shiohata N."/>
            <person name="Sano S."/>
            <person name="Moriya S."/>
            <person name="Momiyama H."/>
            <person name="Satoh N."/>
            <person name="Takami S."/>
            <person name="Terashima Y."/>
            <person name="Suzuki O."/>
            <person name="Nakagawa S."/>
            <person name="Senoh A."/>
            <person name="Mizoguchi H."/>
            <person name="Goto Y."/>
            <person name="Shimizu F."/>
            <person name="Wakebe H."/>
            <person name="Hishigaki H."/>
            <person name="Watanabe T."/>
            <person name="Sugiyama A."/>
            <person name="Takemoto M."/>
            <person name="Kawakami B."/>
            <person name="Yamazaki M."/>
            <person name="Watanabe K."/>
            <person name="Kumagai A."/>
            <person name="Itakura S."/>
            <person name="Fukuzumi Y."/>
            <person name="Fujimori Y."/>
            <person name="Komiyama M."/>
            <person name="Tashiro H."/>
            <person name="Tanigami A."/>
            <person name="Fujiwara T."/>
            <person name="Ono T."/>
            <person name="Yamada K."/>
            <person name="Fujii Y."/>
            <person name="Ozaki K."/>
            <person name="Hirao M."/>
            <person name="Ohmori Y."/>
            <person name="Kawabata A."/>
            <person name="Hikiji T."/>
            <person name="Kobatake N."/>
            <person name="Inagaki H."/>
            <person name="Ikema Y."/>
            <person name="Okamoto S."/>
            <person name="Okitani R."/>
            <person name="Kawakami T."/>
            <person name="Noguchi S."/>
            <person name="Itoh T."/>
            <person name="Shigeta K."/>
            <person name="Senba T."/>
            <person name="Matsumura K."/>
            <person name="Nakajima Y."/>
            <person name="Mizuno T."/>
            <person name="Morinaga M."/>
            <person name="Sasaki M."/>
            <person name="Togashi T."/>
            <person name="Oyama M."/>
            <person name="Hata H."/>
            <person name="Watanabe M."/>
            <person name="Komatsu T."/>
            <person name="Mizushima-Sugano J."/>
            <person name="Satoh T."/>
            <person name="Shirai Y."/>
            <person name="Takahashi Y."/>
            <person name="Nakagawa K."/>
            <person name="Okumura K."/>
            <person name="Nagase T."/>
            <person name="Nomura N."/>
            <person name="Kikuchi H."/>
            <person name="Masuho Y."/>
            <person name="Yamashita R."/>
            <person name="Nakai K."/>
            <person name="Yada T."/>
            <person name="Nakamura Y."/>
            <person name="Ohara O."/>
            <person name="Isogai T."/>
            <person name="Sugano S."/>
        </authorList>
    </citation>
    <scope>NUCLEOTIDE SEQUENCE [LARGE SCALE MRNA] (ISOFORM 4)</scope>
    <source>
        <tissue>Testis</tissue>
    </source>
</reference>
<reference key="4">
    <citation type="journal article" date="2005" name="Nature">
        <title>Generation and annotation of the DNA sequences of human chromosomes 2 and 4.</title>
        <authorList>
            <person name="Hillier L.W."/>
            <person name="Graves T.A."/>
            <person name="Fulton R.S."/>
            <person name="Fulton L.A."/>
            <person name="Pepin K.H."/>
            <person name="Minx P."/>
            <person name="Wagner-McPherson C."/>
            <person name="Layman D."/>
            <person name="Wylie K."/>
            <person name="Sekhon M."/>
            <person name="Becker M.C."/>
            <person name="Fewell G.A."/>
            <person name="Delehaunty K.D."/>
            <person name="Miner T.L."/>
            <person name="Nash W.E."/>
            <person name="Kremitzki C."/>
            <person name="Oddy L."/>
            <person name="Du H."/>
            <person name="Sun H."/>
            <person name="Bradshaw-Cordum H."/>
            <person name="Ali J."/>
            <person name="Carter J."/>
            <person name="Cordes M."/>
            <person name="Harris A."/>
            <person name="Isak A."/>
            <person name="van Brunt A."/>
            <person name="Nguyen C."/>
            <person name="Du F."/>
            <person name="Courtney L."/>
            <person name="Kalicki J."/>
            <person name="Ozersky P."/>
            <person name="Abbott S."/>
            <person name="Armstrong J."/>
            <person name="Belter E.A."/>
            <person name="Caruso L."/>
            <person name="Cedroni M."/>
            <person name="Cotton M."/>
            <person name="Davidson T."/>
            <person name="Desai A."/>
            <person name="Elliott G."/>
            <person name="Erb T."/>
            <person name="Fronick C."/>
            <person name="Gaige T."/>
            <person name="Haakenson W."/>
            <person name="Haglund K."/>
            <person name="Holmes A."/>
            <person name="Harkins R."/>
            <person name="Kim K."/>
            <person name="Kruchowski S.S."/>
            <person name="Strong C.M."/>
            <person name="Grewal N."/>
            <person name="Goyea E."/>
            <person name="Hou S."/>
            <person name="Levy A."/>
            <person name="Martinka S."/>
            <person name="Mead K."/>
            <person name="McLellan M.D."/>
            <person name="Meyer R."/>
            <person name="Randall-Maher J."/>
            <person name="Tomlinson C."/>
            <person name="Dauphin-Kohlberg S."/>
            <person name="Kozlowicz-Reilly A."/>
            <person name="Shah N."/>
            <person name="Swearengen-Shahid S."/>
            <person name="Snider J."/>
            <person name="Strong J.T."/>
            <person name="Thompson J."/>
            <person name="Yoakum M."/>
            <person name="Leonard S."/>
            <person name="Pearman C."/>
            <person name="Trani L."/>
            <person name="Radionenko M."/>
            <person name="Waligorski J.E."/>
            <person name="Wang C."/>
            <person name="Rock S.M."/>
            <person name="Tin-Wollam A.-M."/>
            <person name="Maupin R."/>
            <person name="Latreille P."/>
            <person name="Wendl M.C."/>
            <person name="Yang S.-P."/>
            <person name="Pohl C."/>
            <person name="Wallis J.W."/>
            <person name="Spieth J."/>
            <person name="Bieri T.A."/>
            <person name="Berkowicz N."/>
            <person name="Nelson J.O."/>
            <person name="Osborne J."/>
            <person name="Ding L."/>
            <person name="Meyer R."/>
            <person name="Sabo A."/>
            <person name="Shotland Y."/>
            <person name="Sinha P."/>
            <person name="Wohldmann P.E."/>
            <person name="Cook L.L."/>
            <person name="Hickenbotham M.T."/>
            <person name="Eldred J."/>
            <person name="Williams D."/>
            <person name="Jones T.A."/>
            <person name="She X."/>
            <person name="Ciccarelli F.D."/>
            <person name="Izaurralde E."/>
            <person name="Taylor J."/>
            <person name="Schmutz J."/>
            <person name="Myers R.M."/>
            <person name="Cox D.R."/>
            <person name="Huang X."/>
            <person name="McPherson J.D."/>
            <person name="Mardis E.R."/>
            <person name="Clifton S.W."/>
            <person name="Warren W.C."/>
            <person name="Chinwalla A.T."/>
            <person name="Eddy S.R."/>
            <person name="Marra M.A."/>
            <person name="Ovcharenko I."/>
            <person name="Furey T.S."/>
            <person name="Miller W."/>
            <person name="Eichler E.E."/>
            <person name="Bork P."/>
            <person name="Suyama M."/>
            <person name="Torrents D."/>
            <person name="Waterston R.H."/>
            <person name="Wilson R.K."/>
        </authorList>
    </citation>
    <scope>NUCLEOTIDE SEQUENCE [LARGE SCALE GENOMIC DNA]</scope>
</reference>
<reference key="5">
    <citation type="journal article" date="2004" name="Genome Res.">
        <title>The status, quality, and expansion of the NIH full-length cDNA project: the Mammalian Gene Collection (MGC).</title>
        <authorList>
            <consortium name="The MGC Project Team"/>
        </authorList>
    </citation>
    <scope>NUCLEOTIDE SEQUENCE [LARGE SCALE MRNA] (ISOFORMS 1; 2 AND 3)</scope>
    <source>
        <tissue>Testis</tissue>
    </source>
</reference>
<reference key="6">
    <citation type="journal article" date="1999" name="J. Cell Biol.">
        <title>The eps15 homology (EH) domain-based interaction between eps15 and hrb connects the molecular machinery of endocytosis to that of nucleocytosolic transport.</title>
        <authorList>
            <person name="Doria M."/>
            <person name="Salcini A.E."/>
            <person name="Colombo E."/>
            <person name="Parslow T.G."/>
            <person name="Pelicci P.G."/>
            <person name="Di Fiore P.P."/>
        </authorList>
    </citation>
    <scope>SUBCELLULAR LOCATION</scope>
    <scope>INTERACTION WITH EPS15</scope>
    <scope>FUNCTION</scope>
</reference>
<reference key="7">
    <citation type="journal article" date="2004" name="Genes Dev.">
        <title>hRIP, a cellular cofactor for Rev function, promotes release of HIV RNAs from the perinuclear region.</title>
        <authorList>
            <person name="Sanchez-Velar N."/>
            <person name="Udofia E.B."/>
            <person name="Yu Z."/>
            <person name="Zapp M.L."/>
        </authorList>
    </citation>
    <scope>FUNCTION</scope>
</reference>
<reference key="8">
    <citation type="journal article" date="2005" name="Proc. Natl. Acad. Sci. U.S.A.">
        <title>The cellular HIV-1 Rev cofactor hRIP is required for viral replication.</title>
        <authorList>
            <person name="Yu Z."/>
            <person name="Sanchez-Velar N."/>
            <person name="Catrina I.E."/>
            <person name="Kittler E.L."/>
            <person name="Udofia E.B."/>
            <person name="Zapp M.L."/>
        </authorList>
    </citation>
    <scope>FUNCTION</scope>
</reference>
<reference key="9">
    <citation type="journal article" date="2006" name="Cell">
        <title>Global, in vivo, and site-specific phosphorylation dynamics in signaling networks.</title>
        <authorList>
            <person name="Olsen J.V."/>
            <person name="Blagoev B."/>
            <person name="Gnad F."/>
            <person name="Macek B."/>
            <person name="Kumar C."/>
            <person name="Mortensen P."/>
            <person name="Mann M."/>
        </authorList>
    </citation>
    <scope>IDENTIFICATION BY MASS SPECTROMETRY [LARGE SCALE ANALYSIS]</scope>
    <source>
        <tissue>Cervix carcinoma</tissue>
    </source>
</reference>
<reference key="10">
    <citation type="journal article" date="2008" name="J. Proteome Res.">
        <title>Phosphoproteome of resting human platelets.</title>
        <authorList>
            <person name="Zahedi R.P."/>
            <person name="Lewandrowski U."/>
            <person name="Wiesner J."/>
            <person name="Wortelkamp S."/>
            <person name="Moebius J."/>
            <person name="Schuetz C."/>
            <person name="Walter U."/>
            <person name="Gambaryan S."/>
            <person name="Sickmann A."/>
        </authorList>
    </citation>
    <scope>IDENTIFICATION BY MASS SPECTROMETRY [LARGE SCALE ANALYSIS]</scope>
    <source>
        <tissue>Platelet</tissue>
    </source>
</reference>
<reference key="11">
    <citation type="journal article" date="2008" name="Proc. Natl. Acad. Sci. U.S.A.">
        <title>A quantitative atlas of mitotic phosphorylation.</title>
        <authorList>
            <person name="Dephoure N."/>
            <person name="Zhou C."/>
            <person name="Villen J."/>
            <person name="Beausoleil S.A."/>
            <person name="Bakalarski C.E."/>
            <person name="Elledge S.J."/>
            <person name="Gygi S.P."/>
        </authorList>
    </citation>
    <scope>PHOSPHORYLATION [LARGE SCALE ANALYSIS] AT THR-177 AND SER-181</scope>
    <scope>IDENTIFICATION BY MASS SPECTROMETRY [LARGE SCALE ANALYSIS]</scope>
    <source>
        <tissue>Cervix carcinoma</tissue>
    </source>
</reference>
<reference key="12">
    <citation type="journal article" date="2009" name="Anal. Chem.">
        <title>Lys-N and trypsin cover complementary parts of the phosphoproteome in a refined SCX-based approach.</title>
        <authorList>
            <person name="Gauci S."/>
            <person name="Helbig A.O."/>
            <person name="Slijper M."/>
            <person name="Krijgsveld J."/>
            <person name="Heck A.J."/>
            <person name="Mohammed S."/>
        </authorList>
    </citation>
    <scope>IDENTIFICATION BY MASS SPECTROMETRY [LARGE SCALE ANALYSIS]</scope>
</reference>
<reference key="13">
    <citation type="journal article" date="2009" name="Sci. Signal.">
        <title>Quantitative phosphoproteomic analysis of T cell receptor signaling reveals system-wide modulation of protein-protein interactions.</title>
        <authorList>
            <person name="Mayya V."/>
            <person name="Lundgren D.H."/>
            <person name="Hwang S.-I."/>
            <person name="Rezaul K."/>
            <person name="Wu L."/>
            <person name="Eng J.K."/>
            <person name="Rodionov V."/>
            <person name="Han D.K."/>
        </authorList>
    </citation>
    <scope>PHOSPHORYLATION [LARGE SCALE ANALYSIS] AT THR-177</scope>
    <scope>IDENTIFICATION BY MASS SPECTROMETRY [LARGE SCALE ANALYSIS]</scope>
    <source>
        <tissue>Leukemic T-cell</tissue>
    </source>
</reference>
<reference key="14">
    <citation type="journal article" date="2010" name="Sci. Signal.">
        <title>Quantitative phosphoproteomics reveals widespread full phosphorylation site occupancy during mitosis.</title>
        <authorList>
            <person name="Olsen J.V."/>
            <person name="Vermeulen M."/>
            <person name="Santamaria A."/>
            <person name="Kumar C."/>
            <person name="Miller M.L."/>
            <person name="Jensen L.J."/>
            <person name="Gnad F."/>
            <person name="Cox J."/>
            <person name="Jensen T.S."/>
            <person name="Nigg E.A."/>
            <person name="Brunak S."/>
            <person name="Mann M."/>
        </authorList>
    </citation>
    <scope>PHOSPHORYLATION [LARGE SCALE ANALYSIS] AT SER-181</scope>
    <scope>IDENTIFICATION BY MASS SPECTROMETRY [LARGE SCALE ANALYSIS]</scope>
    <source>
        <tissue>Cervix carcinoma</tissue>
    </source>
</reference>
<reference key="15">
    <citation type="journal article" date="2011" name="BMC Syst. Biol.">
        <title>Initial characterization of the human central proteome.</title>
        <authorList>
            <person name="Burkard T.R."/>
            <person name="Planyavsky M."/>
            <person name="Kaupe I."/>
            <person name="Breitwieser F.P."/>
            <person name="Buerckstuemmer T."/>
            <person name="Bennett K.L."/>
            <person name="Superti-Furga G."/>
            <person name="Colinge J."/>
        </authorList>
    </citation>
    <scope>IDENTIFICATION BY MASS SPECTROMETRY [LARGE SCALE ANALYSIS]</scope>
</reference>
<reference key="16">
    <citation type="journal article" date="2011" name="Sci. Signal.">
        <title>System-wide temporal characterization of the proteome and phosphoproteome of human embryonic stem cell differentiation.</title>
        <authorList>
            <person name="Rigbolt K.T."/>
            <person name="Prokhorova T.A."/>
            <person name="Akimov V."/>
            <person name="Henningsen J."/>
            <person name="Johansen P.T."/>
            <person name="Kratchmarova I."/>
            <person name="Kassem M."/>
            <person name="Mann M."/>
            <person name="Olsen J.V."/>
            <person name="Blagoev B."/>
        </authorList>
    </citation>
    <scope>PHOSPHORYLATION [LARGE SCALE ANALYSIS] AT SER-181</scope>
    <scope>IDENTIFICATION BY MASS SPECTROMETRY [LARGE SCALE ANALYSIS]</scope>
</reference>
<reference key="17">
    <citation type="journal article" date="2012" name="Nat. Cell Biol.">
        <title>Distinct and separable activities of the endocytic clathrin-coat components Fcho1/2 and AP-2 in developmental patterning.</title>
        <authorList>
            <person name="Umasankar P.K."/>
            <person name="Sanker S."/>
            <person name="Thieman J.R."/>
            <person name="Chakraborty S."/>
            <person name="Wendland B."/>
            <person name="Tsang M."/>
            <person name="Traub L.M."/>
        </authorList>
    </citation>
    <scope>INTERACTION WITH FCHO1</scope>
</reference>
<reference key="18">
    <citation type="journal article" date="2013" name="J. Proteome Res.">
        <title>Toward a comprehensive characterization of a human cancer cell phosphoproteome.</title>
        <authorList>
            <person name="Zhou H."/>
            <person name="Di Palma S."/>
            <person name="Preisinger C."/>
            <person name="Peng M."/>
            <person name="Polat A.N."/>
            <person name="Heck A.J."/>
            <person name="Mohammed S."/>
        </authorList>
    </citation>
    <scope>PHOSPHORYLATION [LARGE SCALE ANALYSIS] AT SER-167; THR-177; SER-181 AND SER-362</scope>
    <scope>IDENTIFICATION BY MASS SPECTROMETRY [LARGE SCALE ANALYSIS]</scope>
    <source>
        <tissue>Cervix carcinoma</tissue>
        <tissue>Erythroleukemia</tissue>
    </source>
</reference>
<reference key="19">
    <citation type="journal article" date="2014" name="J. Proteomics">
        <title>An enzyme assisted RP-RPLC approach for in-depth analysis of human liver phosphoproteome.</title>
        <authorList>
            <person name="Bian Y."/>
            <person name="Song C."/>
            <person name="Cheng K."/>
            <person name="Dong M."/>
            <person name="Wang F."/>
            <person name="Huang J."/>
            <person name="Sun D."/>
            <person name="Wang L."/>
            <person name="Ye M."/>
            <person name="Zou H."/>
        </authorList>
    </citation>
    <scope>PHOSPHORYLATION [LARGE SCALE ANALYSIS] AT SER-181</scope>
    <scope>IDENTIFICATION BY MASS SPECTROMETRY [LARGE SCALE ANALYSIS]</scope>
    <source>
        <tissue>Liver</tissue>
    </source>
</reference>
<reference key="20">
    <citation type="journal article" date="2015" name="Proteomics">
        <title>N-terminome analysis of the human mitochondrial proteome.</title>
        <authorList>
            <person name="Vaca Jacome A.S."/>
            <person name="Rabilloud T."/>
            <person name="Schaeffer-Reiss C."/>
            <person name="Rompais M."/>
            <person name="Ayoub D."/>
            <person name="Lane L."/>
            <person name="Bairoch A."/>
            <person name="Van Dorsselaer A."/>
            <person name="Carapito C."/>
        </authorList>
    </citation>
    <scope>IDENTIFICATION BY MASS SPECTROMETRY [LARGE SCALE ANALYSIS]</scope>
</reference>
<reference key="21">
    <citation type="submission" date="2006-12" db="PDB data bank">
        <title>Solution structure of the ARFGAP domain of human RIP.</title>
        <authorList>
            <consortium name="RIKEN structural genomics initiative (RSGI)"/>
        </authorList>
    </citation>
    <scope>STRUCTURE BY NMR OF 14-134</scope>
</reference>
<gene>
    <name type="primary">AGFG1</name>
    <name type="synonym">HRB</name>
    <name type="synonym">RAB</name>
    <name type="synonym">RIP</name>
</gene>
<feature type="chain" id="PRO_0000204904" description="Arf-GAP domain and FG repeat-containing protein 1">
    <location>
        <begin position="1"/>
        <end position="562"/>
    </location>
</feature>
<feature type="domain" description="Arf-GAP" evidence="2">
    <location>
        <begin position="11"/>
        <end position="135"/>
    </location>
</feature>
<feature type="zinc finger region" description="C4-type" evidence="2">
    <location>
        <begin position="29"/>
        <end position="52"/>
    </location>
</feature>
<feature type="region of interest" description="Disordered" evidence="3">
    <location>
        <begin position="145"/>
        <end position="193"/>
    </location>
</feature>
<feature type="compositionally biased region" description="Polar residues" evidence="3">
    <location>
        <begin position="176"/>
        <end position="191"/>
    </location>
</feature>
<feature type="modified residue" description="Phosphoserine" evidence="17">
    <location>
        <position position="167"/>
    </location>
</feature>
<feature type="modified residue" description="Phosphothreonine" evidence="13 14 17">
    <location>
        <position position="177"/>
    </location>
</feature>
<feature type="modified residue" description="Phosphoserine" evidence="13 15 16 17 18">
    <location>
        <position position="181"/>
    </location>
</feature>
<feature type="modified residue" description="Phosphoserine" evidence="17">
    <location>
        <position position="362"/>
    </location>
</feature>
<feature type="glycosylation site" description="O-linked (GlcNAc) serine" evidence="1">
    <location>
        <position position="367"/>
    </location>
</feature>
<feature type="splice variant" id="VSP_017600" description="In isoform 2." evidence="11">
    <location>
        <begin position="232"/>
        <end position="271"/>
    </location>
</feature>
<feature type="splice variant" id="VSP_046186" description="In isoform 4." evidence="10">
    <original>G</original>
    <variation>AFRMLSSSCSFGEFTSAFPLQATHS</variation>
    <location>
        <position position="272"/>
    </location>
</feature>
<feature type="splice variant" id="VSP_017601" description="In isoform 3 and isoform 4." evidence="10 11">
    <location>
        <begin position="513"/>
        <end position="514"/>
    </location>
</feature>
<feature type="sequence conflict" description="In Ref. 2; CAA61667." evidence="12" ref="2">
    <original>H</original>
    <variation>R</variation>
    <location>
        <position position="25"/>
    </location>
</feature>
<feature type="sequence conflict" description="In Ref. 2; CAA61667." evidence="12" ref="2">
    <original>A</original>
    <variation>R</variation>
    <location>
        <position position="429"/>
    </location>
</feature>
<feature type="sequence conflict" description="In Ref. 3; BAG53473." evidence="12" ref="3">
    <original>F</original>
    <variation>S</variation>
    <location>
        <position position="542"/>
    </location>
</feature>
<feature type="helix" evidence="19">
    <location>
        <begin position="4"/>
        <end position="21"/>
    </location>
</feature>
<feature type="helix" evidence="19">
    <location>
        <begin position="24"/>
        <end position="27"/>
    </location>
</feature>
<feature type="turn" evidence="19">
    <location>
        <begin position="30"/>
        <end position="32"/>
    </location>
</feature>
<feature type="strand" evidence="19">
    <location>
        <begin position="39"/>
        <end position="41"/>
    </location>
</feature>
<feature type="turn" evidence="19">
    <location>
        <begin position="42"/>
        <end position="45"/>
    </location>
</feature>
<feature type="strand" evidence="19">
    <location>
        <begin position="46"/>
        <end position="48"/>
    </location>
</feature>
<feature type="helix" evidence="19">
    <location>
        <begin position="50"/>
        <end position="56"/>
    </location>
</feature>
<feature type="strand" evidence="19">
    <location>
        <begin position="59"/>
        <end position="61"/>
    </location>
</feature>
<feature type="strand" evidence="19">
    <location>
        <begin position="65"/>
        <end position="67"/>
    </location>
</feature>
<feature type="turn" evidence="19">
    <location>
        <begin position="68"/>
        <end position="70"/>
    </location>
</feature>
<feature type="helix" evidence="19">
    <location>
        <begin position="75"/>
        <end position="83"/>
    </location>
</feature>
<feature type="helix" evidence="19">
    <location>
        <begin position="85"/>
        <end position="93"/>
    </location>
</feature>
<feature type="turn" evidence="19">
    <location>
        <begin position="94"/>
        <end position="96"/>
    </location>
</feature>
<feature type="turn" evidence="19">
    <location>
        <begin position="99"/>
        <end position="101"/>
    </location>
</feature>
<feature type="helix" evidence="19">
    <location>
        <begin position="110"/>
        <end position="121"/>
    </location>
</feature>
<feature type="helix" evidence="19">
    <location>
        <begin position="130"/>
        <end position="134"/>
    </location>
</feature>
<feature type="strand" evidence="20">
    <location>
        <begin position="157"/>
        <end position="159"/>
    </location>
</feature>
<feature type="helix" evidence="20">
    <location>
        <begin position="160"/>
        <end position="164"/>
    </location>
</feature>
<dbReference type="EMBL" id="L42025">
    <property type="protein sequence ID" value="AAC37580.1"/>
    <property type="molecule type" value="Genomic_DNA"/>
</dbReference>
<dbReference type="EMBL" id="X89478">
    <property type="protein sequence ID" value="CAA61667.1"/>
    <property type="molecule type" value="mRNA"/>
</dbReference>
<dbReference type="EMBL" id="AK097451">
    <property type="protein sequence ID" value="BAG53473.1"/>
    <property type="status" value="ALT_SEQ"/>
    <property type="molecule type" value="mRNA"/>
</dbReference>
<dbReference type="EMBL" id="AC105286">
    <property type="protein sequence ID" value="AAX93270.1"/>
    <property type="molecule type" value="Genomic_DNA"/>
</dbReference>
<dbReference type="EMBL" id="AC097662">
    <property type="protein sequence ID" value="AAY24254.1"/>
    <property type="molecule type" value="Genomic_DNA"/>
</dbReference>
<dbReference type="EMBL" id="BC030592">
    <property type="protein sequence ID" value="AAH30592.1"/>
    <property type="molecule type" value="mRNA"/>
</dbReference>
<dbReference type="EMBL" id="BC096272">
    <property type="protein sequence ID" value="AAH96272.1"/>
    <property type="molecule type" value="mRNA"/>
</dbReference>
<dbReference type="EMBL" id="BC096273">
    <property type="protein sequence ID" value="AAH96273.1"/>
    <property type="molecule type" value="mRNA"/>
</dbReference>
<dbReference type="EMBL" id="BC096274">
    <property type="protein sequence ID" value="AAH96274.1"/>
    <property type="molecule type" value="mRNA"/>
</dbReference>
<dbReference type="EMBL" id="BC096275">
    <property type="protein sequence ID" value="AAH96275.1"/>
    <property type="molecule type" value="mRNA"/>
</dbReference>
<dbReference type="CCDS" id="CCDS2467.1">
    <molecule id="P52594-1"/>
</dbReference>
<dbReference type="CCDS" id="CCDS46533.1">
    <molecule id="P52594-4"/>
</dbReference>
<dbReference type="CCDS" id="CCDS46534.1">
    <molecule id="P52594-3"/>
</dbReference>
<dbReference type="CCDS" id="CCDS46535.1">
    <molecule id="P52594-2"/>
</dbReference>
<dbReference type="PIR" id="A57088">
    <property type="entry name" value="A57088"/>
</dbReference>
<dbReference type="RefSeq" id="NP_001128659.1">
    <molecule id="P52594-4"/>
    <property type="nucleotide sequence ID" value="NM_001135187.2"/>
</dbReference>
<dbReference type="RefSeq" id="NP_001128660.1">
    <molecule id="P52594-3"/>
    <property type="nucleotide sequence ID" value="NM_001135188.2"/>
</dbReference>
<dbReference type="RefSeq" id="NP_001128661.1">
    <molecule id="P52594-2"/>
    <property type="nucleotide sequence ID" value="NM_001135189.2"/>
</dbReference>
<dbReference type="RefSeq" id="NP_004495.2">
    <molecule id="P52594-1"/>
    <property type="nucleotide sequence ID" value="NM_004504.4"/>
</dbReference>
<dbReference type="PDB" id="2D9L">
    <property type="method" value="NMR"/>
    <property type="chains" value="A=14-134"/>
</dbReference>
<dbReference type="PDB" id="2OLM">
    <property type="method" value="X-ray"/>
    <property type="resolution" value="1.48 A"/>
    <property type="chains" value="A=4-141"/>
</dbReference>
<dbReference type="PDB" id="2VX8">
    <property type="method" value="X-ray"/>
    <property type="resolution" value="2.20 A"/>
    <property type="chains" value="A/B/C/D=136-175"/>
</dbReference>
<dbReference type="PDBsum" id="2D9L"/>
<dbReference type="PDBsum" id="2OLM"/>
<dbReference type="PDBsum" id="2VX8"/>
<dbReference type="SMR" id="P52594"/>
<dbReference type="BioGRID" id="109503">
    <property type="interactions" value="124"/>
</dbReference>
<dbReference type="DIP" id="DIP-35546N"/>
<dbReference type="ELM" id="P52594"/>
<dbReference type="FunCoup" id="P52594">
    <property type="interactions" value="3422"/>
</dbReference>
<dbReference type="IntAct" id="P52594">
    <property type="interactions" value="40"/>
</dbReference>
<dbReference type="MINT" id="P52594"/>
<dbReference type="STRING" id="9606.ENSP00000387282"/>
<dbReference type="GlyCosmos" id="P52594">
    <property type="glycosylation" value="36 sites, 2 glycans"/>
</dbReference>
<dbReference type="GlyGen" id="P52594">
    <property type="glycosylation" value="41 sites, 1 N-linked glycan (1 site), 2 O-linked glycans (39 sites)"/>
</dbReference>
<dbReference type="iPTMnet" id="P52594"/>
<dbReference type="PhosphoSitePlus" id="P52594"/>
<dbReference type="BioMuta" id="AGFG1"/>
<dbReference type="DMDM" id="26007019"/>
<dbReference type="jPOST" id="P52594"/>
<dbReference type="MassIVE" id="P52594"/>
<dbReference type="PaxDb" id="9606-ENSP00000387282"/>
<dbReference type="PeptideAtlas" id="P52594"/>
<dbReference type="ProteomicsDB" id="20621"/>
<dbReference type="ProteomicsDB" id="56494">
    <molecule id="P52594-1"/>
</dbReference>
<dbReference type="ProteomicsDB" id="56495">
    <molecule id="P52594-2"/>
</dbReference>
<dbReference type="ProteomicsDB" id="56496">
    <molecule id="P52594-3"/>
</dbReference>
<dbReference type="Pumba" id="P52594"/>
<dbReference type="Antibodypedia" id="1598">
    <property type="antibodies" value="221 antibodies from 31 providers"/>
</dbReference>
<dbReference type="DNASU" id="3267"/>
<dbReference type="Ensembl" id="ENST00000310078.13">
    <molecule id="P52594-1"/>
    <property type="protein sequence ID" value="ENSP00000312059.7"/>
    <property type="gene ID" value="ENSG00000173744.18"/>
</dbReference>
<dbReference type="Ensembl" id="ENST00000373671.7">
    <molecule id="P52594-2"/>
    <property type="protein sequence ID" value="ENSP00000362775.3"/>
    <property type="gene ID" value="ENSG00000173744.18"/>
</dbReference>
<dbReference type="Ensembl" id="ENST00000409171.5">
    <molecule id="P52594-3"/>
    <property type="protein sequence ID" value="ENSP00000387218.1"/>
    <property type="gene ID" value="ENSG00000173744.18"/>
</dbReference>
<dbReference type="Ensembl" id="ENST00000409979.6">
    <molecule id="P52594-4"/>
    <property type="protein sequence ID" value="ENSP00000387282.2"/>
    <property type="gene ID" value="ENSG00000173744.18"/>
</dbReference>
<dbReference type="GeneID" id="3267"/>
<dbReference type="KEGG" id="hsa:3267"/>
<dbReference type="MANE-Select" id="ENST00000310078.13">
    <property type="protein sequence ID" value="ENSP00000312059.7"/>
    <property type="RefSeq nucleotide sequence ID" value="NM_004504.5"/>
    <property type="RefSeq protein sequence ID" value="NP_004495.2"/>
</dbReference>
<dbReference type="UCSC" id="uc002vpc.3">
    <molecule id="P52594-1"/>
    <property type="organism name" value="human"/>
</dbReference>
<dbReference type="AGR" id="HGNC:5175"/>
<dbReference type="CTD" id="3267"/>
<dbReference type="DisGeNET" id="3267"/>
<dbReference type="GeneCards" id="AGFG1"/>
<dbReference type="HGNC" id="HGNC:5175">
    <property type="gene designation" value="AGFG1"/>
</dbReference>
<dbReference type="HPA" id="ENSG00000173744">
    <property type="expression patterns" value="Low tissue specificity"/>
</dbReference>
<dbReference type="MIM" id="600862">
    <property type="type" value="gene"/>
</dbReference>
<dbReference type="neXtProt" id="NX_P52594"/>
<dbReference type="OpenTargets" id="ENSG00000173744"/>
<dbReference type="PharmGKB" id="PA29449"/>
<dbReference type="VEuPathDB" id="HostDB:ENSG00000173744"/>
<dbReference type="eggNOG" id="KOG0702">
    <property type="taxonomic scope" value="Eukaryota"/>
</dbReference>
<dbReference type="GeneTree" id="ENSGT00940000155511"/>
<dbReference type="InParanoid" id="P52594"/>
<dbReference type="OMA" id="SDCKRNK"/>
<dbReference type="OrthoDB" id="6036at2759"/>
<dbReference type="PAN-GO" id="P52594">
    <property type="GO annotations" value="5 GO annotations based on evolutionary models"/>
</dbReference>
<dbReference type="PhylomeDB" id="P52594"/>
<dbReference type="TreeFam" id="TF325357"/>
<dbReference type="PathwayCommons" id="P52594"/>
<dbReference type="Reactome" id="R-HSA-8856825">
    <property type="pathway name" value="Cargo recognition for clathrin-mediated endocytosis"/>
</dbReference>
<dbReference type="Reactome" id="R-HSA-8856828">
    <property type="pathway name" value="Clathrin-mediated endocytosis"/>
</dbReference>
<dbReference type="SignaLink" id="P52594"/>
<dbReference type="BioGRID-ORCS" id="3267">
    <property type="hits" value="20 hits in 1166 CRISPR screens"/>
</dbReference>
<dbReference type="ChiTaRS" id="AGFG1">
    <property type="organism name" value="human"/>
</dbReference>
<dbReference type="EvolutionaryTrace" id="P52594"/>
<dbReference type="GeneWiki" id="HRB_(gene)"/>
<dbReference type="GenomeRNAi" id="3267"/>
<dbReference type="Pharos" id="P52594">
    <property type="development level" value="Tbio"/>
</dbReference>
<dbReference type="PRO" id="PR:P52594"/>
<dbReference type="Proteomes" id="UP000005640">
    <property type="component" value="Chromosome 2"/>
</dbReference>
<dbReference type="RNAct" id="P52594">
    <property type="molecule type" value="protein"/>
</dbReference>
<dbReference type="Bgee" id="ENSG00000173744">
    <property type="expression patterns" value="Expressed in sperm and 206 other cell types or tissues"/>
</dbReference>
<dbReference type="ExpressionAtlas" id="P52594">
    <property type="expression patterns" value="baseline and differential"/>
</dbReference>
<dbReference type="GO" id="GO:0042995">
    <property type="term" value="C:cell projection"/>
    <property type="evidence" value="ECO:0007669"/>
    <property type="project" value="Ensembl"/>
</dbReference>
<dbReference type="GO" id="GO:0005737">
    <property type="term" value="C:cytoplasm"/>
    <property type="evidence" value="ECO:0000318"/>
    <property type="project" value="GO_Central"/>
</dbReference>
<dbReference type="GO" id="GO:0031410">
    <property type="term" value="C:cytoplasmic vesicle"/>
    <property type="evidence" value="ECO:0000318"/>
    <property type="project" value="GO_Central"/>
</dbReference>
<dbReference type="GO" id="GO:0005829">
    <property type="term" value="C:cytosol"/>
    <property type="evidence" value="ECO:0000304"/>
    <property type="project" value="Reactome"/>
</dbReference>
<dbReference type="GO" id="GO:0043231">
    <property type="term" value="C:intracellular membrane-bounded organelle"/>
    <property type="evidence" value="ECO:0000314"/>
    <property type="project" value="HPA"/>
</dbReference>
<dbReference type="GO" id="GO:0043025">
    <property type="term" value="C:neuronal cell body"/>
    <property type="evidence" value="ECO:0007669"/>
    <property type="project" value="Ensembl"/>
</dbReference>
<dbReference type="GO" id="GO:0005643">
    <property type="term" value="C:nuclear pore"/>
    <property type="evidence" value="ECO:0000304"/>
    <property type="project" value="ProtInc"/>
</dbReference>
<dbReference type="GO" id="GO:0003677">
    <property type="term" value="F:DNA binding"/>
    <property type="evidence" value="ECO:0007669"/>
    <property type="project" value="UniProtKB-KW"/>
</dbReference>
<dbReference type="GO" id="GO:0005096">
    <property type="term" value="F:GTPase activator activity"/>
    <property type="evidence" value="ECO:0007669"/>
    <property type="project" value="InterPro"/>
</dbReference>
<dbReference type="GO" id="GO:0003723">
    <property type="term" value="F:RNA binding"/>
    <property type="evidence" value="ECO:0000304"/>
    <property type="project" value="ProtInc"/>
</dbReference>
<dbReference type="GO" id="GO:0008270">
    <property type="term" value="F:zinc ion binding"/>
    <property type="evidence" value="ECO:0007669"/>
    <property type="project" value="UniProtKB-KW"/>
</dbReference>
<dbReference type="GO" id="GO:0001675">
    <property type="term" value="P:acrosome assembly"/>
    <property type="evidence" value="ECO:0000318"/>
    <property type="project" value="GO_Central"/>
</dbReference>
<dbReference type="GO" id="GO:0045109">
    <property type="term" value="P:intermediate filament organization"/>
    <property type="evidence" value="ECO:0000318"/>
    <property type="project" value="GO_Central"/>
</dbReference>
<dbReference type="GO" id="GO:0006406">
    <property type="term" value="P:mRNA export from nucleus"/>
    <property type="evidence" value="ECO:0000304"/>
    <property type="project" value="ProtInc"/>
</dbReference>
<dbReference type="GO" id="GO:0007289">
    <property type="term" value="P:spermatid nucleus differentiation"/>
    <property type="evidence" value="ECO:0000318"/>
    <property type="project" value="GO_Central"/>
</dbReference>
<dbReference type="CDD" id="cd08857">
    <property type="entry name" value="ArfGap_AGFG1"/>
    <property type="match status" value="1"/>
</dbReference>
<dbReference type="FunFam" id="1.10.220.150:FF:000005">
    <property type="entry name" value="Arf-GAP domain and FG repeat-containing protein 1"/>
    <property type="match status" value="1"/>
</dbReference>
<dbReference type="FunFam" id="3.30.450.50:FF:000005">
    <property type="entry name" value="arf-GAP domain and FG repeat-containing protein 1"/>
    <property type="match status" value="1"/>
</dbReference>
<dbReference type="Gene3D" id="1.10.220.150">
    <property type="entry name" value="Arf GTPase activating protein"/>
    <property type="match status" value="1"/>
</dbReference>
<dbReference type="Gene3D" id="3.30.450.50">
    <property type="entry name" value="Longin domain"/>
    <property type="match status" value="1"/>
</dbReference>
<dbReference type="InterPro" id="IPR052248">
    <property type="entry name" value="Arf-GAP_FG-repeat_protein"/>
</dbReference>
<dbReference type="InterPro" id="IPR037278">
    <property type="entry name" value="ARFGAP/RecO"/>
</dbReference>
<dbReference type="InterPro" id="IPR001164">
    <property type="entry name" value="ArfGAP_dom"/>
</dbReference>
<dbReference type="InterPro" id="IPR038508">
    <property type="entry name" value="ArfGAP_dom_sf"/>
</dbReference>
<dbReference type="PANTHER" id="PTHR46134:SF1">
    <property type="entry name" value="ARF-GAP DOMAIN AND FG REPEAT-CONTAINING PROTEIN 1"/>
    <property type="match status" value="1"/>
</dbReference>
<dbReference type="PANTHER" id="PTHR46134">
    <property type="entry name" value="DRONGO, ISOFORM F"/>
    <property type="match status" value="1"/>
</dbReference>
<dbReference type="Pfam" id="PF01412">
    <property type="entry name" value="ArfGap"/>
    <property type="match status" value="1"/>
</dbReference>
<dbReference type="PRINTS" id="PR00405">
    <property type="entry name" value="REVINTRACTNG"/>
</dbReference>
<dbReference type="SMART" id="SM00105">
    <property type="entry name" value="ArfGap"/>
    <property type="match status" value="1"/>
</dbReference>
<dbReference type="SUPFAM" id="SSF57863">
    <property type="entry name" value="ArfGap/RecO-like zinc finger"/>
    <property type="match status" value="1"/>
</dbReference>
<dbReference type="PROSITE" id="PS50115">
    <property type="entry name" value="ARFGAP"/>
    <property type="match status" value="1"/>
</dbReference>
<protein>
    <recommendedName>
        <fullName>Arf-GAP domain and FG repeat-containing protein 1</fullName>
    </recommendedName>
    <alternativeName>
        <fullName>HIV-1 Rev-binding protein</fullName>
    </alternativeName>
    <alternativeName>
        <fullName>Nucleoporin-like protein RIP</fullName>
    </alternativeName>
    <alternativeName>
        <fullName>Rev-interacting protein</fullName>
    </alternativeName>
    <alternativeName>
        <fullName>Rev/Rex activation domain-binding protein</fullName>
    </alternativeName>
</protein>
<accession>P52594</accession>
<accession>B3KUL1</accession>
<accession>E9PHX7</accession>
<accession>Q15277</accession>
<accession>Q4VAS0</accession>
<accession>Q4VAS1</accession>
<accession>Q4VAS3</accession>
<accession>Q53QT8</accession>
<accession>Q53R11</accession>
<comment type="function">
    <text evidence="1 4 5 6">Required for vesicle docking or fusion during acrosome biogenesis (By similarity). May play a role in RNA trafficking or localization. In case of infection by HIV-1, acts as a cofactor for viral Rev and promotes movement of Rev-responsive element-containing RNAs from the nuclear periphery to the cytoplasm. This step is essential for HIV-1 replication.</text>
</comment>
<comment type="subunit">
    <text evidence="4 7 8 9">Interacts with EPS15R and EPS15. Interacts with FCHO1.</text>
</comment>
<comment type="interaction">
    <interactant intactId="EBI-996560">
        <id>P52594</id>
    </interactant>
    <interactant intactId="EBI-10269689">
        <id>Q9P242</id>
        <label>NYAP2</label>
    </interactant>
    <organismsDiffer>false</organismsDiffer>
    <experiments>3</experiments>
</comment>
<comment type="interaction">
    <interactant intactId="EBI-996560">
        <id>P52594</id>
    </interactant>
    <interactant intactId="EBI-713847">
        <id>P56282</id>
        <label>POLE2</label>
    </interactant>
    <organismsDiffer>false</organismsDiffer>
    <experiments>3</experiments>
</comment>
<comment type="interaction">
    <interactant intactId="EBI-996560">
        <id>P52594</id>
    </interactant>
    <interactant intactId="EBI-1052205">
        <id>P51809</id>
        <label>VAMP7</label>
    </interactant>
    <organismsDiffer>false</organismsDiffer>
    <experiments>7</experiments>
</comment>
<comment type="subcellular location">
    <subcellularLocation>
        <location evidence="4 8">Nucleus</location>
    </subcellularLocation>
    <subcellularLocation>
        <location evidence="4">Cytoplasmic vesicle</location>
    </subcellularLocation>
</comment>
<comment type="alternative products">
    <event type="alternative splicing"/>
    <isoform>
        <id>P52594-1</id>
        <name>1</name>
        <sequence type="displayed"/>
    </isoform>
    <isoform>
        <id>P52594-2</id>
        <name>2</name>
        <sequence type="described" ref="VSP_017600"/>
    </isoform>
    <isoform>
        <id>P52594-3</id>
        <name>3</name>
        <sequence type="described" ref="VSP_017601"/>
    </isoform>
    <isoform>
        <id>P52594-4</id>
        <name>4</name>
        <sequence type="described" ref="VSP_046186 VSP_017601"/>
    </isoform>
</comment>
<comment type="tissue specificity">
    <text evidence="8">Ubiquitously expressed.</text>
</comment>
<comment type="domain">
    <text>Contains FG repeats. The FG repeat region is required for acting as a cofactor of HIV-1 Rev.</text>
</comment>
<comment type="PTM">
    <text evidence="1">O-glycosylated.</text>
</comment>
<comment type="sequence caution" evidence="12">
    <conflict type="miscellaneous discrepancy">
        <sequence resource="EMBL-CDS" id="BAG53473"/>
    </conflict>
    <text>Aberrant splicing within exon 1.</text>
</comment>
<sequence>MAASAKRKQEEKHLKMLRDMTGLPHNRKCFDCDQRGPTYVNMTVGSFVCTSCSGSLRGLNPPHRVKSISMTTFTQQEIEFLQKHGNEVCKQIWLGLFDDRSSAIPDFRDPQKVKEFLQEKYEKKRWYVPPEQAKVVASVHASISGSSASSTSSTPEVKPLKSLLGDSAPTLHLNKGTPSQSPVVGRSQGQQQEKKQFDLLSDLGSDIFAAPAPQSTATANFANFAHFNSHAAQNSANADFANFDAFGQSSGSSNFGGFPTASHSPFQPQTTGGSAASVNANFAHFDNFPKSSSADFGTFNTSQSHQTASAVSKVSTNKAGLQTADKYAALANLDNIFSAGQGGDQGSGFGTTGKAPVGSVVSVPSQSSASSDKYAALAELDSVFSSAATSSNAYTSTSNASSNVFGTVPVVASAQTQPASSSVPAPFGATPSTNPFVAAAGPSVASSTNPFQTNARGATAATFGTASMSMPTGFGTPAPYSLPTSFSGSFQQPAFPAQAAFPQQTAFSQQPNGAGFAAFGQTKPVVTPFGQVAAAGVSSNPFMTGAPTGQFPTGSSSTNPFL</sequence>
<organism>
    <name type="scientific">Homo sapiens</name>
    <name type="common">Human</name>
    <dbReference type="NCBI Taxonomy" id="9606"/>
    <lineage>
        <taxon>Eukaryota</taxon>
        <taxon>Metazoa</taxon>
        <taxon>Chordata</taxon>
        <taxon>Craniata</taxon>
        <taxon>Vertebrata</taxon>
        <taxon>Euteleostomi</taxon>
        <taxon>Mammalia</taxon>
        <taxon>Eutheria</taxon>
        <taxon>Euarchontoglires</taxon>
        <taxon>Primates</taxon>
        <taxon>Haplorrhini</taxon>
        <taxon>Catarrhini</taxon>
        <taxon>Hominidae</taxon>
        <taxon>Homo</taxon>
    </lineage>
</organism>
<name>AGFG1_HUMAN</name>
<evidence type="ECO:0000250" key="1"/>
<evidence type="ECO:0000255" key="2">
    <source>
        <dbReference type="PROSITE-ProRule" id="PRU00288"/>
    </source>
</evidence>
<evidence type="ECO:0000256" key="3">
    <source>
        <dbReference type="SAM" id="MobiDB-lite"/>
    </source>
</evidence>
<evidence type="ECO:0000269" key="4">
    <source>
    </source>
</evidence>
<evidence type="ECO:0000269" key="5">
    <source>
    </source>
</evidence>
<evidence type="ECO:0000269" key="6">
    <source>
    </source>
</evidence>
<evidence type="ECO:0000269" key="7">
    <source>
    </source>
</evidence>
<evidence type="ECO:0000269" key="8">
    <source>
    </source>
</evidence>
<evidence type="ECO:0000269" key="9">
    <source>
    </source>
</evidence>
<evidence type="ECO:0000303" key="10">
    <source>
    </source>
</evidence>
<evidence type="ECO:0000303" key="11">
    <source>
    </source>
</evidence>
<evidence type="ECO:0000305" key="12"/>
<evidence type="ECO:0007744" key="13">
    <source>
    </source>
</evidence>
<evidence type="ECO:0007744" key="14">
    <source>
    </source>
</evidence>
<evidence type="ECO:0007744" key="15">
    <source>
    </source>
</evidence>
<evidence type="ECO:0007744" key="16">
    <source>
    </source>
</evidence>
<evidence type="ECO:0007744" key="17">
    <source>
    </source>
</evidence>
<evidence type="ECO:0007744" key="18">
    <source>
    </source>
</evidence>
<evidence type="ECO:0007829" key="19">
    <source>
        <dbReference type="PDB" id="2OLM"/>
    </source>
</evidence>
<evidence type="ECO:0007829" key="20">
    <source>
        <dbReference type="PDB" id="2VX8"/>
    </source>
</evidence>
<keyword id="KW-0002">3D-structure</keyword>
<keyword id="KW-0025">Alternative splicing</keyword>
<keyword id="KW-0968">Cytoplasmic vesicle</keyword>
<keyword id="KW-0217">Developmental protein</keyword>
<keyword id="KW-0221">Differentiation</keyword>
<keyword id="KW-0238">DNA-binding</keyword>
<keyword id="KW-0325">Glycoprotein</keyword>
<keyword id="KW-0479">Metal-binding</keyword>
<keyword id="KW-0509">mRNA transport</keyword>
<keyword id="KW-0539">Nucleus</keyword>
<keyword id="KW-0597">Phosphoprotein</keyword>
<keyword id="KW-1267">Proteomics identification</keyword>
<keyword id="KW-1185">Reference proteome</keyword>
<keyword id="KW-0677">Repeat</keyword>
<keyword id="KW-0744">Spermatogenesis</keyword>
<keyword id="KW-0813">Transport</keyword>
<keyword id="KW-0862">Zinc</keyword>
<keyword id="KW-0863">Zinc-finger</keyword>